<gene>
    <name evidence="1" type="primary">dnaA</name>
    <name type="ordered locus">Blon_0001</name>
    <name type="ordered locus">BLIJ_0001</name>
</gene>
<comment type="function">
    <text evidence="1">Plays an essential role in the initiation and regulation of chromosomal replication. ATP-DnaA binds to the origin of replication (oriC) to initiate formation of the DNA replication initiation complex once per cell cycle. Binds the DnaA box (a 9 base pair repeat at the origin) and separates the double-stranded (ds)DNA. Forms a right-handed helical filament on oriC DNA; dsDNA binds to the exterior of the filament while single-stranded (ss)DNA is stabiized in the filament's interior. The ATP-DnaA-oriC complex binds and stabilizes one strand of the AT-rich DNA unwinding element (DUE), permitting loading of DNA polymerase. After initiation quickly degrades to an ADP-DnaA complex that is not apt for DNA replication. Binds acidic phospholipids.</text>
</comment>
<comment type="subunit">
    <text evidence="1">Oligomerizes as a right-handed, spiral filament on DNA at oriC.</text>
</comment>
<comment type="subcellular location">
    <subcellularLocation>
        <location evidence="1">Cytoplasm</location>
    </subcellularLocation>
</comment>
<comment type="domain">
    <text evidence="1">Domain I is involved in oligomerization and binding regulators, domain II is flexibile and of varying length in different bacteria, domain III forms the AAA+ region, while domain IV binds dsDNA.</text>
</comment>
<comment type="similarity">
    <text evidence="1">Belongs to the DnaA family.</text>
</comment>
<proteinExistence type="inferred from homology"/>
<protein>
    <recommendedName>
        <fullName evidence="1">Chromosomal replication initiator protein DnaA</fullName>
    </recommendedName>
</protein>
<keyword id="KW-0067">ATP-binding</keyword>
<keyword id="KW-0963">Cytoplasm</keyword>
<keyword id="KW-0235">DNA replication</keyword>
<keyword id="KW-0238">DNA-binding</keyword>
<keyword id="KW-0446">Lipid-binding</keyword>
<keyword id="KW-0547">Nucleotide-binding</keyword>
<organism>
    <name type="scientific">Bifidobacterium longum subsp. infantis (strain ATCC 15697 / DSM 20088 / JCM 1222 / NCTC 11817 / S12)</name>
    <dbReference type="NCBI Taxonomy" id="391904"/>
    <lineage>
        <taxon>Bacteria</taxon>
        <taxon>Bacillati</taxon>
        <taxon>Actinomycetota</taxon>
        <taxon>Actinomycetes</taxon>
        <taxon>Bifidobacteriales</taxon>
        <taxon>Bifidobacteriaceae</taxon>
        <taxon>Bifidobacterium</taxon>
    </lineage>
</organism>
<evidence type="ECO:0000255" key="1">
    <source>
        <dbReference type="HAMAP-Rule" id="MF_00377"/>
    </source>
</evidence>
<feature type="chain" id="PRO_1000189783" description="Chromosomal replication initiator protein DnaA">
    <location>
        <begin position="1"/>
        <end position="500"/>
    </location>
</feature>
<feature type="region of interest" description="Domain I, interacts with DnaA modulators" evidence="1">
    <location>
        <begin position="1"/>
        <end position="81"/>
    </location>
</feature>
<feature type="region of interest" description="Domain II" evidence="1">
    <location>
        <begin position="81"/>
        <end position="155"/>
    </location>
</feature>
<feature type="region of interest" description="Domain III, AAA+ region" evidence="1">
    <location>
        <begin position="156"/>
        <end position="377"/>
    </location>
</feature>
<feature type="region of interest" description="Domain IV, binds dsDNA" evidence="1">
    <location>
        <begin position="378"/>
        <end position="500"/>
    </location>
</feature>
<feature type="binding site" evidence="1">
    <location>
        <position position="200"/>
    </location>
    <ligand>
        <name>ATP</name>
        <dbReference type="ChEBI" id="CHEBI:30616"/>
    </ligand>
</feature>
<feature type="binding site" evidence="1">
    <location>
        <position position="202"/>
    </location>
    <ligand>
        <name>ATP</name>
        <dbReference type="ChEBI" id="CHEBI:30616"/>
    </ligand>
</feature>
<feature type="binding site" evidence="1">
    <location>
        <position position="203"/>
    </location>
    <ligand>
        <name>ATP</name>
        <dbReference type="ChEBI" id="CHEBI:30616"/>
    </ligand>
</feature>
<feature type="binding site" evidence="1">
    <location>
        <position position="204"/>
    </location>
    <ligand>
        <name>ATP</name>
        <dbReference type="ChEBI" id="CHEBI:30616"/>
    </ligand>
</feature>
<sequence length="500" mass="55269">MVNASGDPVIEAAHIWSDTLTVLKHSASLSPREKGWLEGVVPEGVFGSTIVLCVDNNDTLQAIQGDLNDSLLQALRTVTGENMFPAFKVVPKTEPEPLSAAKPAQPYPSEISPTVAEFGKESYGAKPVAAPREPMPATESQFPVGQQKMNRDPETHLNKNFTFDSFVPGDSNRFARTVALAVAEGSGQDFNPLCIYGGSGLGKTHLLNAIGNYALVKDPGLKVRYVTSEEFTNEFIDALQNPNQSQGQIAEFNRRYRQVDVLLIDDIQFLGGKEATLDQFFHTFNALHQANKRIVIASDVAPKNLKGFEARLISRFESGLTVDVKPPDLETRIAILRMIASMNGSKIPSDVLDLIAERFTENIRELEGALTRVTAVASLSNQPVTRALAEQTLQDFFTTDVEIKPTDIISQVAKYFHLTFEDLVGKSRTKNVAVPRQIAMYLAREMTSMSLMDIGQVFGGRDHTTVMHACTRISDRMQQKQEIYNYVMELTVRLKQSNTN</sequence>
<name>DNAA_BIFLS</name>
<dbReference type="EMBL" id="CP001095">
    <property type="protein sequence ID" value="ACJ51137.1"/>
    <property type="molecule type" value="Genomic_DNA"/>
</dbReference>
<dbReference type="EMBL" id="AP010889">
    <property type="protein sequence ID" value="BAJ67596.1"/>
    <property type="molecule type" value="Genomic_DNA"/>
</dbReference>
<dbReference type="RefSeq" id="WP_007057882.1">
    <property type="nucleotide sequence ID" value="NZ_JDTT01000013.1"/>
</dbReference>
<dbReference type="SMR" id="B7GSF9"/>
<dbReference type="KEGG" id="bln:Blon_0001"/>
<dbReference type="KEGG" id="blon:BLIJ_0001"/>
<dbReference type="PATRIC" id="fig|391904.8.peg.1"/>
<dbReference type="HOGENOM" id="CLU_026910_2_2_11"/>
<dbReference type="Proteomes" id="UP000001360">
    <property type="component" value="Chromosome"/>
</dbReference>
<dbReference type="GO" id="GO:0005737">
    <property type="term" value="C:cytoplasm"/>
    <property type="evidence" value="ECO:0007669"/>
    <property type="project" value="UniProtKB-SubCell"/>
</dbReference>
<dbReference type="GO" id="GO:0005886">
    <property type="term" value="C:plasma membrane"/>
    <property type="evidence" value="ECO:0007669"/>
    <property type="project" value="TreeGrafter"/>
</dbReference>
<dbReference type="GO" id="GO:0005524">
    <property type="term" value="F:ATP binding"/>
    <property type="evidence" value="ECO:0007669"/>
    <property type="project" value="UniProtKB-UniRule"/>
</dbReference>
<dbReference type="GO" id="GO:0016887">
    <property type="term" value="F:ATP hydrolysis activity"/>
    <property type="evidence" value="ECO:0007669"/>
    <property type="project" value="InterPro"/>
</dbReference>
<dbReference type="GO" id="GO:0003688">
    <property type="term" value="F:DNA replication origin binding"/>
    <property type="evidence" value="ECO:0007669"/>
    <property type="project" value="UniProtKB-UniRule"/>
</dbReference>
<dbReference type="GO" id="GO:0008289">
    <property type="term" value="F:lipid binding"/>
    <property type="evidence" value="ECO:0007669"/>
    <property type="project" value="UniProtKB-KW"/>
</dbReference>
<dbReference type="GO" id="GO:0006270">
    <property type="term" value="P:DNA replication initiation"/>
    <property type="evidence" value="ECO:0007669"/>
    <property type="project" value="UniProtKB-UniRule"/>
</dbReference>
<dbReference type="GO" id="GO:0006275">
    <property type="term" value="P:regulation of DNA replication"/>
    <property type="evidence" value="ECO:0007669"/>
    <property type="project" value="UniProtKB-UniRule"/>
</dbReference>
<dbReference type="CDD" id="cd00009">
    <property type="entry name" value="AAA"/>
    <property type="match status" value="1"/>
</dbReference>
<dbReference type="CDD" id="cd06571">
    <property type="entry name" value="Bac_DnaA_C"/>
    <property type="match status" value="1"/>
</dbReference>
<dbReference type="FunFam" id="3.40.50.300:FF:000668">
    <property type="entry name" value="Chromosomal replication initiator protein DnaA"/>
    <property type="match status" value="1"/>
</dbReference>
<dbReference type="Gene3D" id="1.10.1750.10">
    <property type="match status" value="1"/>
</dbReference>
<dbReference type="Gene3D" id="1.10.8.60">
    <property type="match status" value="1"/>
</dbReference>
<dbReference type="Gene3D" id="3.40.50.300">
    <property type="entry name" value="P-loop containing nucleotide triphosphate hydrolases"/>
    <property type="match status" value="1"/>
</dbReference>
<dbReference type="HAMAP" id="MF_00377">
    <property type="entry name" value="DnaA_bact"/>
    <property type="match status" value="1"/>
</dbReference>
<dbReference type="InterPro" id="IPR003593">
    <property type="entry name" value="AAA+_ATPase"/>
</dbReference>
<dbReference type="InterPro" id="IPR001957">
    <property type="entry name" value="Chromosome_initiator_DnaA"/>
</dbReference>
<dbReference type="InterPro" id="IPR020591">
    <property type="entry name" value="Chromosome_initiator_DnaA-like"/>
</dbReference>
<dbReference type="InterPro" id="IPR018312">
    <property type="entry name" value="Chromosome_initiator_DnaA_CS"/>
</dbReference>
<dbReference type="InterPro" id="IPR013159">
    <property type="entry name" value="DnaA_C"/>
</dbReference>
<dbReference type="InterPro" id="IPR013317">
    <property type="entry name" value="DnaA_dom"/>
</dbReference>
<dbReference type="InterPro" id="IPR027417">
    <property type="entry name" value="P-loop_NTPase"/>
</dbReference>
<dbReference type="InterPro" id="IPR010921">
    <property type="entry name" value="Trp_repressor/repl_initiator"/>
</dbReference>
<dbReference type="NCBIfam" id="TIGR00362">
    <property type="entry name" value="DnaA"/>
    <property type="match status" value="1"/>
</dbReference>
<dbReference type="PANTHER" id="PTHR30050">
    <property type="entry name" value="CHROMOSOMAL REPLICATION INITIATOR PROTEIN DNAA"/>
    <property type="match status" value="1"/>
</dbReference>
<dbReference type="PANTHER" id="PTHR30050:SF2">
    <property type="entry name" value="CHROMOSOMAL REPLICATION INITIATOR PROTEIN DNAA"/>
    <property type="match status" value="1"/>
</dbReference>
<dbReference type="Pfam" id="PF00308">
    <property type="entry name" value="Bac_DnaA"/>
    <property type="match status" value="1"/>
</dbReference>
<dbReference type="Pfam" id="PF08299">
    <property type="entry name" value="Bac_DnaA_C"/>
    <property type="match status" value="1"/>
</dbReference>
<dbReference type="PRINTS" id="PR00051">
    <property type="entry name" value="DNAA"/>
</dbReference>
<dbReference type="SMART" id="SM00382">
    <property type="entry name" value="AAA"/>
    <property type="match status" value="1"/>
</dbReference>
<dbReference type="SMART" id="SM00760">
    <property type="entry name" value="Bac_DnaA_C"/>
    <property type="match status" value="1"/>
</dbReference>
<dbReference type="SUPFAM" id="SSF52540">
    <property type="entry name" value="P-loop containing nucleoside triphosphate hydrolases"/>
    <property type="match status" value="1"/>
</dbReference>
<dbReference type="SUPFAM" id="SSF48295">
    <property type="entry name" value="TrpR-like"/>
    <property type="match status" value="1"/>
</dbReference>
<dbReference type="PROSITE" id="PS01008">
    <property type="entry name" value="DNAA"/>
    <property type="match status" value="1"/>
</dbReference>
<reference key="1">
    <citation type="journal article" date="2008" name="Proc. Natl. Acad. Sci. U.S.A.">
        <title>The genome sequence of Bifidobacterium longum subsp. infantis reveals adaptations for milk utilization within the infant microbiome.</title>
        <authorList>
            <person name="Sela D.A."/>
            <person name="Chapman J."/>
            <person name="Adeuya A."/>
            <person name="Kim J.H."/>
            <person name="Chen F."/>
            <person name="Whitehead T.R."/>
            <person name="Lapidus A."/>
            <person name="Rokhsar D.S."/>
            <person name="Lebrilla C.B."/>
            <person name="German J.B."/>
            <person name="Price N.P."/>
            <person name="Richardson P.M."/>
            <person name="Mills D.A."/>
        </authorList>
    </citation>
    <scope>NUCLEOTIDE SEQUENCE [LARGE SCALE GENOMIC DNA]</scope>
    <source>
        <strain>ATCC 15697 / DSM 20088 / JCM 1222 / NCTC 11817 / S12</strain>
    </source>
</reference>
<reference key="2">
    <citation type="journal article" date="2011" name="Nature">
        <title>Bifidobacteria can protect from enteropathogenic infection through production of acetate.</title>
        <authorList>
            <person name="Fukuda S."/>
            <person name="Toh H."/>
            <person name="Hase K."/>
            <person name="Oshima K."/>
            <person name="Nakanishi Y."/>
            <person name="Yoshimura K."/>
            <person name="Tobe T."/>
            <person name="Clarke J.M."/>
            <person name="Topping D.L."/>
            <person name="Suzuki T."/>
            <person name="Taylor T.D."/>
            <person name="Itoh K."/>
            <person name="Kikuchi J."/>
            <person name="Morita H."/>
            <person name="Hattori M."/>
            <person name="Ohno H."/>
        </authorList>
    </citation>
    <scope>NUCLEOTIDE SEQUENCE [LARGE SCALE GENOMIC DNA]</scope>
    <source>
        <strain>ATCC 15697 / DSM 20088 / JCM 1222 / NCTC 11817 / S12</strain>
    </source>
</reference>
<accession>B7GSF9</accession>
<accession>E8MMK8</accession>